<sequence>MSIQLNGINCFYGAHQALFDITLDCPQGETLVLLGPSGAGKSSLLRVLNLLEMPRSGTLNIAGNHFDFTKTPSDKAIRDLRRNVGMVFQQYNLWPHLTVQQNLIEAPCRVLGLSKDQALARAEKLLERLRLKPYSDRYPLHLSGGQQQRVAIARALMMEPQVLLFDEPTAALDPEITAQIVSIIRELAETNITQVIVTHEVEVARKTASRVVYMENGHIVEQGDASCFTEPQTEAFKNYLSH</sequence>
<organism>
    <name type="scientific">Escherichia coli O6:H1 (strain CFT073 / ATCC 700928 / UPEC)</name>
    <dbReference type="NCBI Taxonomy" id="199310"/>
    <lineage>
        <taxon>Bacteria</taxon>
        <taxon>Pseudomonadati</taxon>
        <taxon>Pseudomonadota</taxon>
        <taxon>Gammaproteobacteria</taxon>
        <taxon>Enterobacterales</taxon>
        <taxon>Enterobacteriaceae</taxon>
        <taxon>Escherichia</taxon>
    </lineage>
</organism>
<comment type="function">
    <text evidence="1">Part of the ABC transporter complex ArtPIQMJ involved in arginine transport. Probably responsible for energy coupling to the transport system.</text>
</comment>
<comment type="catalytic activity">
    <reaction evidence="1">
        <text>a polar amino acid(out) + ATP + H2O = a polar amino acid(in) + ADP + phosphate + H(+)</text>
        <dbReference type="Rhea" id="RHEA:14673"/>
        <dbReference type="ChEBI" id="CHEBI:15377"/>
        <dbReference type="ChEBI" id="CHEBI:15378"/>
        <dbReference type="ChEBI" id="CHEBI:30616"/>
        <dbReference type="ChEBI" id="CHEBI:43474"/>
        <dbReference type="ChEBI" id="CHEBI:62031"/>
        <dbReference type="ChEBI" id="CHEBI:456216"/>
        <dbReference type="EC" id="7.4.2.1"/>
    </reaction>
    <physiologicalReaction direction="left-to-right" evidence="1">
        <dbReference type="Rhea" id="RHEA:14674"/>
    </physiologicalReaction>
</comment>
<comment type="catalytic activity">
    <reaction evidence="1">
        <text>L-arginine(out) + ATP + H2O = L-arginine(in) + ADP + phosphate + H(+)</text>
        <dbReference type="Rhea" id="RHEA:29879"/>
        <dbReference type="ChEBI" id="CHEBI:15377"/>
        <dbReference type="ChEBI" id="CHEBI:15378"/>
        <dbReference type="ChEBI" id="CHEBI:30616"/>
        <dbReference type="ChEBI" id="CHEBI:32682"/>
        <dbReference type="ChEBI" id="CHEBI:43474"/>
        <dbReference type="ChEBI" id="CHEBI:456216"/>
        <dbReference type="EC" id="7.4.2.1"/>
    </reaction>
    <physiologicalReaction direction="left-to-right" evidence="1">
        <dbReference type="Rhea" id="RHEA:29880"/>
    </physiologicalReaction>
</comment>
<comment type="subunit">
    <text evidence="1">The complex is composed of two ATP-binding proteins (ArtP), two transmembrane proteins (ArtM and ArtQ) and two solute-binding proteins (ArtJ and ArtI).</text>
</comment>
<comment type="subcellular location">
    <subcellularLocation>
        <location evidence="1">Cell inner membrane</location>
        <topology evidence="1">Peripheral membrane protein</topology>
    </subcellularLocation>
</comment>
<comment type="similarity">
    <text evidence="3">Belongs to the ABC transporter superfamily.</text>
</comment>
<comment type="sequence caution" evidence="3">
    <conflict type="erroneous initiation">
        <sequence resource="EMBL-CDS" id="AAN79470"/>
    </conflict>
    <text>Extended N-terminus.</text>
</comment>
<gene>
    <name type="primary">artP</name>
    <name type="ordered locus">c0997</name>
</gene>
<proteinExistence type="inferred from homology"/>
<dbReference type="EC" id="7.4.2.1" evidence="1"/>
<dbReference type="EMBL" id="AE014075">
    <property type="protein sequence ID" value="AAN79470.1"/>
    <property type="status" value="ALT_INIT"/>
    <property type="molecule type" value="Genomic_DNA"/>
</dbReference>
<dbReference type="RefSeq" id="WP_000027205.1">
    <property type="nucleotide sequence ID" value="NZ_CP051263.1"/>
</dbReference>
<dbReference type="SMR" id="P0AAF7"/>
<dbReference type="STRING" id="199310.c0997"/>
<dbReference type="GeneID" id="93776558"/>
<dbReference type="KEGG" id="ecc:c0997"/>
<dbReference type="eggNOG" id="COG1126">
    <property type="taxonomic scope" value="Bacteria"/>
</dbReference>
<dbReference type="HOGENOM" id="CLU_000604_1_22_6"/>
<dbReference type="Proteomes" id="UP000001410">
    <property type="component" value="Chromosome"/>
</dbReference>
<dbReference type="GO" id="GO:0005886">
    <property type="term" value="C:plasma membrane"/>
    <property type="evidence" value="ECO:0007669"/>
    <property type="project" value="UniProtKB-SubCell"/>
</dbReference>
<dbReference type="GO" id="GO:0005524">
    <property type="term" value="F:ATP binding"/>
    <property type="evidence" value="ECO:0007669"/>
    <property type="project" value="UniProtKB-KW"/>
</dbReference>
<dbReference type="GO" id="GO:0016887">
    <property type="term" value="F:ATP hydrolysis activity"/>
    <property type="evidence" value="ECO:0007669"/>
    <property type="project" value="InterPro"/>
</dbReference>
<dbReference type="GO" id="GO:0015426">
    <property type="term" value="F:ATPase-coupled polar amino acid-transporter activity"/>
    <property type="evidence" value="ECO:0007669"/>
    <property type="project" value="RHEA"/>
</dbReference>
<dbReference type="FunFam" id="3.40.50.300:FF:000331">
    <property type="entry name" value="Arginine ABC transporter ATP-binding protein ArtP"/>
    <property type="match status" value="1"/>
</dbReference>
<dbReference type="Gene3D" id="3.40.50.300">
    <property type="entry name" value="P-loop containing nucleotide triphosphate hydrolases"/>
    <property type="match status" value="1"/>
</dbReference>
<dbReference type="InterPro" id="IPR003593">
    <property type="entry name" value="AAA+_ATPase"/>
</dbReference>
<dbReference type="InterPro" id="IPR030679">
    <property type="entry name" value="ABC_ATPase_HisP-typ"/>
</dbReference>
<dbReference type="InterPro" id="IPR003439">
    <property type="entry name" value="ABC_transporter-like_ATP-bd"/>
</dbReference>
<dbReference type="InterPro" id="IPR017871">
    <property type="entry name" value="ABC_transporter-like_CS"/>
</dbReference>
<dbReference type="InterPro" id="IPR050086">
    <property type="entry name" value="MetN_ABC_transporter-like"/>
</dbReference>
<dbReference type="InterPro" id="IPR027417">
    <property type="entry name" value="P-loop_NTPase"/>
</dbReference>
<dbReference type="NCBIfam" id="NF008338">
    <property type="entry name" value="PRK11124.1"/>
    <property type="match status" value="1"/>
</dbReference>
<dbReference type="PANTHER" id="PTHR43166">
    <property type="entry name" value="AMINO ACID IMPORT ATP-BINDING PROTEIN"/>
    <property type="match status" value="1"/>
</dbReference>
<dbReference type="PANTHER" id="PTHR43166:SF25">
    <property type="entry name" value="ARGININE TRANSPORT ATP-BINDING PROTEIN ARTP"/>
    <property type="match status" value="1"/>
</dbReference>
<dbReference type="Pfam" id="PF00005">
    <property type="entry name" value="ABC_tran"/>
    <property type="match status" value="1"/>
</dbReference>
<dbReference type="PIRSF" id="PIRSF039085">
    <property type="entry name" value="ABC_ATPase_HisP"/>
    <property type="match status" value="1"/>
</dbReference>
<dbReference type="SMART" id="SM00382">
    <property type="entry name" value="AAA"/>
    <property type="match status" value="1"/>
</dbReference>
<dbReference type="SUPFAM" id="SSF52540">
    <property type="entry name" value="P-loop containing nucleoside triphosphate hydrolases"/>
    <property type="match status" value="1"/>
</dbReference>
<dbReference type="PROSITE" id="PS00211">
    <property type="entry name" value="ABC_TRANSPORTER_1"/>
    <property type="match status" value="1"/>
</dbReference>
<dbReference type="PROSITE" id="PS50893">
    <property type="entry name" value="ABC_TRANSPORTER_2"/>
    <property type="match status" value="1"/>
</dbReference>
<feature type="chain" id="PRO_0000091941" description="Arginine transport ATP-binding protein ArtP">
    <location>
        <begin position="1"/>
        <end position="242"/>
    </location>
</feature>
<feature type="domain" description="ABC transporter" evidence="2">
    <location>
        <begin position="3"/>
        <end position="241"/>
    </location>
</feature>
<feature type="binding site" evidence="2">
    <location>
        <begin position="35"/>
        <end position="42"/>
    </location>
    <ligand>
        <name>ATP</name>
        <dbReference type="ChEBI" id="CHEBI:30616"/>
    </ligand>
</feature>
<name>ARTP_ECOL6</name>
<keyword id="KW-0029">Amino-acid transport</keyword>
<keyword id="KW-0067">ATP-binding</keyword>
<keyword id="KW-0997">Cell inner membrane</keyword>
<keyword id="KW-1003">Cell membrane</keyword>
<keyword id="KW-0472">Membrane</keyword>
<keyword id="KW-0547">Nucleotide-binding</keyword>
<keyword id="KW-1185">Reference proteome</keyword>
<keyword id="KW-1278">Translocase</keyword>
<keyword id="KW-0813">Transport</keyword>
<evidence type="ECO:0000250" key="1">
    <source>
        <dbReference type="UniProtKB" id="P0AAF6"/>
    </source>
</evidence>
<evidence type="ECO:0000255" key="2">
    <source>
        <dbReference type="PROSITE-ProRule" id="PRU00434"/>
    </source>
</evidence>
<evidence type="ECO:0000305" key="3"/>
<reference key="1">
    <citation type="journal article" date="2002" name="Proc. Natl. Acad. Sci. U.S.A.">
        <title>Extensive mosaic structure revealed by the complete genome sequence of uropathogenic Escherichia coli.</title>
        <authorList>
            <person name="Welch R.A."/>
            <person name="Burland V."/>
            <person name="Plunkett G. III"/>
            <person name="Redford P."/>
            <person name="Roesch P."/>
            <person name="Rasko D."/>
            <person name="Buckles E.L."/>
            <person name="Liou S.-R."/>
            <person name="Boutin A."/>
            <person name="Hackett J."/>
            <person name="Stroud D."/>
            <person name="Mayhew G.F."/>
            <person name="Rose D.J."/>
            <person name="Zhou S."/>
            <person name="Schwartz D.C."/>
            <person name="Perna N.T."/>
            <person name="Mobley H.L.T."/>
            <person name="Donnenberg M.S."/>
            <person name="Blattner F.R."/>
        </authorList>
    </citation>
    <scope>NUCLEOTIDE SEQUENCE [LARGE SCALE GENOMIC DNA]</scope>
    <source>
        <strain>CFT073 / ATCC 700928 / UPEC</strain>
    </source>
</reference>
<protein>
    <recommendedName>
        <fullName evidence="1">Arginine transport ATP-binding protein ArtP</fullName>
        <ecNumber evidence="1">7.4.2.1</ecNumber>
    </recommendedName>
</protein>
<accession>P0AAF7</accession>
<accession>P30858</accession>
<accession>P77355</accession>